<dbReference type="EMBL" id="AP009351">
    <property type="protein sequence ID" value="BAF67816.1"/>
    <property type="molecule type" value="Genomic_DNA"/>
</dbReference>
<dbReference type="RefSeq" id="WP_000271547.1">
    <property type="nucleotide sequence ID" value="NZ_JBBIAE010000001.1"/>
</dbReference>
<dbReference type="SMR" id="A6QHI4"/>
<dbReference type="KEGG" id="sae:NWMN_1544"/>
<dbReference type="HOGENOM" id="CLU_087936_1_0_9"/>
<dbReference type="Proteomes" id="UP000006386">
    <property type="component" value="Chromosome"/>
</dbReference>
<dbReference type="GO" id="GO:0005737">
    <property type="term" value="C:cytoplasm"/>
    <property type="evidence" value="ECO:0007669"/>
    <property type="project" value="UniProtKB-SubCell"/>
</dbReference>
<dbReference type="GO" id="GO:0009379">
    <property type="term" value="C:Holliday junction helicase complex"/>
    <property type="evidence" value="ECO:0007669"/>
    <property type="project" value="InterPro"/>
</dbReference>
<dbReference type="GO" id="GO:0048476">
    <property type="term" value="C:Holliday junction resolvase complex"/>
    <property type="evidence" value="ECO:0007669"/>
    <property type="project" value="UniProtKB-UniRule"/>
</dbReference>
<dbReference type="GO" id="GO:0005524">
    <property type="term" value="F:ATP binding"/>
    <property type="evidence" value="ECO:0007669"/>
    <property type="project" value="InterPro"/>
</dbReference>
<dbReference type="GO" id="GO:0000400">
    <property type="term" value="F:four-way junction DNA binding"/>
    <property type="evidence" value="ECO:0007669"/>
    <property type="project" value="UniProtKB-UniRule"/>
</dbReference>
<dbReference type="GO" id="GO:0009378">
    <property type="term" value="F:four-way junction helicase activity"/>
    <property type="evidence" value="ECO:0007669"/>
    <property type="project" value="InterPro"/>
</dbReference>
<dbReference type="GO" id="GO:0006310">
    <property type="term" value="P:DNA recombination"/>
    <property type="evidence" value="ECO:0007669"/>
    <property type="project" value="UniProtKB-UniRule"/>
</dbReference>
<dbReference type="GO" id="GO:0006281">
    <property type="term" value="P:DNA repair"/>
    <property type="evidence" value="ECO:0007669"/>
    <property type="project" value="UniProtKB-UniRule"/>
</dbReference>
<dbReference type="CDD" id="cd14332">
    <property type="entry name" value="UBA_RuvA_C"/>
    <property type="match status" value="1"/>
</dbReference>
<dbReference type="Gene3D" id="1.10.150.20">
    <property type="entry name" value="5' to 3' exonuclease, C-terminal subdomain"/>
    <property type="match status" value="1"/>
</dbReference>
<dbReference type="Gene3D" id="1.10.8.10">
    <property type="entry name" value="DNA helicase RuvA subunit, C-terminal domain"/>
    <property type="match status" value="1"/>
</dbReference>
<dbReference type="Gene3D" id="2.40.50.140">
    <property type="entry name" value="Nucleic acid-binding proteins"/>
    <property type="match status" value="1"/>
</dbReference>
<dbReference type="HAMAP" id="MF_00031">
    <property type="entry name" value="DNA_HJ_migration_RuvA"/>
    <property type="match status" value="1"/>
</dbReference>
<dbReference type="InterPro" id="IPR013849">
    <property type="entry name" value="DNA_helicase_Holl-junc_RuvA_I"/>
</dbReference>
<dbReference type="InterPro" id="IPR003583">
    <property type="entry name" value="Hlx-hairpin-Hlx_DNA-bd_motif"/>
</dbReference>
<dbReference type="InterPro" id="IPR012340">
    <property type="entry name" value="NA-bd_OB-fold"/>
</dbReference>
<dbReference type="InterPro" id="IPR000085">
    <property type="entry name" value="RuvA"/>
</dbReference>
<dbReference type="InterPro" id="IPR010994">
    <property type="entry name" value="RuvA_2-like"/>
</dbReference>
<dbReference type="InterPro" id="IPR011114">
    <property type="entry name" value="RuvA_C"/>
</dbReference>
<dbReference type="InterPro" id="IPR036267">
    <property type="entry name" value="RuvA_C_sf"/>
</dbReference>
<dbReference type="NCBIfam" id="TIGR00084">
    <property type="entry name" value="ruvA"/>
    <property type="match status" value="1"/>
</dbReference>
<dbReference type="Pfam" id="PF14520">
    <property type="entry name" value="HHH_5"/>
    <property type="match status" value="1"/>
</dbReference>
<dbReference type="Pfam" id="PF07499">
    <property type="entry name" value="RuvA_C"/>
    <property type="match status" value="1"/>
</dbReference>
<dbReference type="Pfam" id="PF01330">
    <property type="entry name" value="RuvA_N"/>
    <property type="match status" value="1"/>
</dbReference>
<dbReference type="SMART" id="SM00278">
    <property type="entry name" value="HhH1"/>
    <property type="match status" value="2"/>
</dbReference>
<dbReference type="SUPFAM" id="SSF46929">
    <property type="entry name" value="DNA helicase RuvA subunit, C-terminal domain"/>
    <property type="match status" value="1"/>
</dbReference>
<dbReference type="SUPFAM" id="SSF50249">
    <property type="entry name" value="Nucleic acid-binding proteins"/>
    <property type="match status" value="1"/>
</dbReference>
<dbReference type="SUPFAM" id="SSF47781">
    <property type="entry name" value="RuvA domain 2-like"/>
    <property type="match status" value="1"/>
</dbReference>
<sequence>MYAYVKGKLTHLYPTHVVVETAGVGYEIQTPNSYRFQKHLDHEVLIHTSLIVREDAQLLYGFSSEEEKDMFLSLIKVTGIGPKSALAILATSTPNEVKRAIENENDTYLTKFPGIGKKTARQIVLDLKGKVKITEEDSDSLLQVDATSTVQDQFVQEAMLALEALGYSKRELAKVEKTLNKNKYDSVDEAVKAGLQLVVS</sequence>
<name>RUVA_STAAE</name>
<evidence type="ECO:0000255" key="1">
    <source>
        <dbReference type="HAMAP-Rule" id="MF_00031"/>
    </source>
</evidence>
<accession>A6QHI4</accession>
<protein>
    <recommendedName>
        <fullName evidence="1">Holliday junction branch migration complex subunit RuvA</fullName>
    </recommendedName>
</protein>
<organism>
    <name type="scientific">Staphylococcus aureus (strain Newman)</name>
    <dbReference type="NCBI Taxonomy" id="426430"/>
    <lineage>
        <taxon>Bacteria</taxon>
        <taxon>Bacillati</taxon>
        <taxon>Bacillota</taxon>
        <taxon>Bacilli</taxon>
        <taxon>Bacillales</taxon>
        <taxon>Staphylococcaceae</taxon>
        <taxon>Staphylococcus</taxon>
    </lineage>
</organism>
<proteinExistence type="inferred from homology"/>
<feature type="chain" id="PRO_1000071021" description="Holliday junction branch migration complex subunit RuvA">
    <location>
        <begin position="1"/>
        <end position="200"/>
    </location>
</feature>
<feature type="region of interest" description="Domain I" evidence="1">
    <location>
        <begin position="1"/>
        <end position="63"/>
    </location>
</feature>
<feature type="region of interest" description="Domain II" evidence="1">
    <location>
        <begin position="64"/>
        <end position="142"/>
    </location>
</feature>
<feature type="region of interest" description="Flexible linker" evidence="1">
    <location>
        <begin position="143"/>
        <end position="149"/>
    </location>
</feature>
<feature type="region of interest" description="Domain III" evidence="1">
    <location>
        <begin position="150"/>
        <end position="200"/>
    </location>
</feature>
<gene>
    <name evidence="1" type="primary">ruvA</name>
    <name type="ordered locus">NWMN_1544</name>
</gene>
<comment type="function">
    <text evidence="1">The RuvA-RuvB-RuvC complex processes Holliday junction (HJ) DNA during genetic recombination and DNA repair, while the RuvA-RuvB complex plays an important role in the rescue of blocked DNA replication forks via replication fork reversal (RFR). RuvA specifically binds to HJ cruciform DNA, conferring on it an open structure. The RuvB hexamer acts as an ATP-dependent pump, pulling dsDNA into and through the RuvAB complex. HJ branch migration allows RuvC to scan DNA until it finds its consensus sequence, where it cleaves and resolves the cruciform DNA.</text>
</comment>
<comment type="subunit">
    <text evidence="1">Homotetramer. Forms an RuvA(8)-RuvB(12)-Holliday junction (HJ) complex. HJ DNA is sandwiched between 2 RuvA tetramers; dsDNA enters through RuvA and exits via RuvB. An RuvB hexamer assembles on each DNA strand where it exits the tetramer. Each RuvB hexamer is contacted by two RuvA subunits (via domain III) on 2 adjacent RuvB subunits; this complex drives branch migration. In the full resolvosome a probable DNA-RuvA(4)-RuvB(12)-RuvC(2) complex forms which resolves the HJ.</text>
</comment>
<comment type="subcellular location">
    <subcellularLocation>
        <location evidence="1">Cytoplasm</location>
    </subcellularLocation>
</comment>
<comment type="domain">
    <text evidence="1">Has three domains with a flexible linker between the domains II and III and assumes an 'L' shape. Domain III is highly mobile and contacts RuvB.</text>
</comment>
<comment type="similarity">
    <text evidence="1">Belongs to the RuvA family.</text>
</comment>
<keyword id="KW-0963">Cytoplasm</keyword>
<keyword id="KW-0227">DNA damage</keyword>
<keyword id="KW-0233">DNA recombination</keyword>
<keyword id="KW-0234">DNA repair</keyword>
<keyword id="KW-0238">DNA-binding</keyword>
<reference key="1">
    <citation type="journal article" date="2008" name="J. Bacteriol.">
        <title>Genome sequence of Staphylococcus aureus strain Newman and comparative analysis of staphylococcal genomes: polymorphism and evolution of two major pathogenicity islands.</title>
        <authorList>
            <person name="Baba T."/>
            <person name="Bae T."/>
            <person name="Schneewind O."/>
            <person name="Takeuchi F."/>
            <person name="Hiramatsu K."/>
        </authorList>
    </citation>
    <scope>NUCLEOTIDE SEQUENCE [LARGE SCALE GENOMIC DNA]</scope>
    <source>
        <strain>Newman</strain>
    </source>
</reference>